<evidence type="ECO:0000250" key="1">
    <source>
        <dbReference type="UniProtKB" id="P03886"/>
    </source>
</evidence>
<evidence type="ECO:0000255" key="2"/>
<evidence type="ECO:0000269" key="3">
    <source>
    </source>
</evidence>
<evidence type="ECO:0000305" key="4"/>
<evidence type="ECO:0007744" key="5">
    <source>
        <dbReference type="PDB" id="8PW5"/>
    </source>
</evidence>
<evidence type="ECO:0007829" key="6">
    <source>
        <dbReference type="PDB" id="6ZR2"/>
    </source>
</evidence>
<evidence type="ECO:0007829" key="7">
    <source>
        <dbReference type="PDB" id="6ZTQ"/>
    </source>
</evidence>
<evidence type="ECO:0007829" key="8">
    <source>
        <dbReference type="PDB" id="8OM1"/>
    </source>
</evidence>
<evidence type="ECO:0007829" key="9">
    <source>
        <dbReference type="PDB" id="8RGP"/>
    </source>
</evidence>
<protein>
    <recommendedName>
        <fullName>NADH-ubiquinone oxidoreductase chain 1</fullName>
        <ecNumber evidence="1">7.1.1.2</ecNumber>
    </recommendedName>
    <alternativeName>
        <fullName>NADH dehydrogenase subunit 1</fullName>
    </alternativeName>
</protein>
<comment type="function">
    <text evidence="3">Core subunit of the mitochondrial membrane respiratory chain NADH dehydrogenase (Complex I) which catalyzes electron transfer from NADH through the respiratory chain, using ubiquinone as an electron acceptor. Essential for the catalytic activity and assembly of complex I.</text>
</comment>
<comment type="catalytic activity">
    <reaction evidence="1">
        <text>a ubiquinone + NADH + 5 H(+)(in) = a ubiquinol + NAD(+) + 4 H(+)(out)</text>
        <dbReference type="Rhea" id="RHEA:29091"/>
        <dbReference type="Rhea" id="RHEA-COMP:9565"/>
        <dbReference type="Rhea" id="RHEA-COMP:9566"/>
        <dbReference type="ChEBI" id="CHEBI:15378"/>
        <dbReference type="ChEBI" id="CHEBI:16389"/>
        <dbReference type="ChEBI" id="CHEBI:17976"/>
        <dbReference type="ChEBI" id="CHEBI:57540"/>
        <dbReference type="ChEBI" id="CHEBI:57945"/>
        <dbReference type="EC" id="7.1.1.2"/>
    </reaction>
</comment>
<comment type="subunit">
    <text evidence="3">Core subunit of respiratory chain NADH dehydrogenase (Complex I) which is composed of 45 different subunits.</text>
</comment>
<comment type="subcellular location">
    <subcellularLocation>
        <location evidence="3">Mitochondrion inner membrane</location>
        <topology evidence="2">Multi-pass membrane protein</topology>
    </subcellularLocation>
</comment>
<comment type="similarity">
    <text evidence="4">Belongs to the complex I subunit 1 family.</text>
</comment>
<comment type="sequence caution" evidence="4">
    <conflict type="erroneous initiation">
        <sequence resource="EMBL-CDS" id="AAB48644"/>
    </conflict>
</comment>
<comment type="sequence caution" evidence="4">
    <conflict type="erroneous initiation">
        <sequence resource="EMBL-CDS" id="CAA24080"/>
    </conflict>
</comment>
<feature type="chain" id="PRO_0000117431" description="NADH-ubiquinone oxidoreductase chain 1">
    <location>
        <begin position="1"/>
        <end position="318"/>
    </location>
</feature>
<feature type="transmembrane region" description="Helical" evidence="2">
    <location>
        <begin position="2"/>
        <end position="22"/>
    </location>
</feature>
<feature type="transmembrane region" description="Helical" evidence="2">
    <location>
        <begin position="70"/>
        <end position="90"/>
    </location>
</feature>
<feature type="transmembrane region" description="Helical" evidence="2">
    <location>
        <begin position="100"/>
        <end position="120"/>
    </location>
</feature>
<feature type="transmembrane region" description="Helical" evidence="2">
    <location>
        <begin position="136"/>
        <end position="156"/>
    </location>
</feature>
<feature type="transmembrane region" description="Helical" evidence="2">
    <location>
        <begin position="171"/>
        <end position="191"/>
    </location>
</feature>
<feature type="transmembrane region" description="Helical" evidence="2">
    <location>
        <begin position="231"/>
        <end position="251"/>
    </location>
</feature>
<feature type="transmembrane region" description="Helical" evidence="2">
    <location>
        <begin position="253"/>
        <end position="273"/>
    </location>
</feature>
<feature type="transmembrane region" description="Helical" evidence="2">
    <location>
        <begin position="293"/>
        <end position="313"/>
    </location>
</feature>
<feature type="helix" evidence="8">
    <location>
        <begin position="2"/>
        <end position="31"/>
    </location>
</feature>
<feature type="turn" evidence="8">
    <location>
        <begin position="39"/>
        <end position="41"/>
    </location>
</feature>
<feature type="helix" evidence="8">
    <location>
        <begin position="42"/>
        <end position="44"/>
    </location>
</feature>
<feature type="helix" evidence="8">
    <location>
        <begin position="47"/>
        <end position="56"/>
    </location>
</feature>
<feature type="strand" evidence="7">
    <location>
        <begin position="64"/>
        <end position="66"/>
    </location>
</feature>
<feature type="helix" evidence="8">
    <location>
        <begin position="68"/>
        <end position="84"/>
    </location>
</feature>
<feature type="turn" evidence="8">
    <location>
        <begin position="85"/>
        <end position="88"/>
    </location>
</feature>
<feature type="strand" evidence="8">
    <location>
        <begin position="91"/>
        <end position="93"/>
    </location>
</feature>
<feature type="helix" evidence="8">
    <location>
        <begin position="101"/>
        <end position="123"/>
    </location>
</feature>
<feature type="helix" evidence="8">
    <location>
        <begin position="126"/>
        <end position="157"/>
    </location>
</feature>
<feature type="strand" evidence="6">
    <location>
        <begin position="158"/>
        <end position="160"/>
    </location>
</feature>
<feature type="helix" evidence="8">
    <location>
        <begin position="162"/>
        <end position="168"/>
    </location>
</feature>
<feature type="strand" evidence="8">
    <location>
        <begin position="170"/>
        <end position="172"/>
    </location>
</feature>
<feature type="helix" evidence="8">
    <location>
        <begin position="175"/>
        <end position="192"/>
    </location>
</feature>
<feature type="strand" evidence="9">
    <location>
        <begin position="196"/>
        <end position="198"/>
    </location>
</feature>
<feature type="turn" evidence="8">
    <location>
        <begin position="200"/>
        <end position="202"/>
    </location>
</feature>
<feature type="helix" evidence="8">
    <location>
        <begin position="204"/>
        <end position="207"/>
    </location>
</feature>
<feature type="helix" evidence="8">
    <location>
        <begin position="210"/>
        <end position="212"/>
    </location>
</feature>
<feature type="helix" evidence="8">
    <location>
        <begin position="217"/>
        <end position="242"/>
    </location>
</feature>
<feature type="helix" evidence="8">
    <location>
        <begin position="252"/>
        <end position="274"/>
    </location>
</feature>
<feature type="helix" evidence="8">
    <location>
        <begin position="282"/>
        <end position="291"/>
    </location>
</feature>
<feature type="helix" evidence="8">
    <location>
        <begin position="293"/>
        <end position="310"/>
    </location>
</feature>
<geneLocation type="mitochondrion"/>
<keyword id="KW-0002">3D-structure</keyword>
<keyword id="KW-0903">Direct protein sequencing</keyword>
<keyword id="KW-0249">Electron transport</keyword>
<keyword id="KW-0472">Membrane</keyword>
<keyword id="KW-0496">Mitochondrion</keyword>
<keyword id="KW-0999">Mitochondrion inner membrane</keyword>
<keyword id="KW-0520">NAD</keyword>
<keyword id="KW-1185">Reference proteome</keyword>
<keyword id="KW-0679">Respiratory chain</keyword>
<keyword id="KW-1278">Translocase</keyword>
<keyword id="KW-0812">Transmembrane</keyword>
<keyword id="KW-1133">Transmembrane helix</keyword>
<keyword id="KW-0813">Transport</keyword>
<keyword id="KW-0830">Ubiquinone</keyword>
<organism>
    <name type="scientific">Mus musculus</name>
    <name type="common">Mouse</name>
    <dbReference type="NCBI Taxonomy" id="10090"/>
    <lineage>
        <taxon>Eukaryota</taxon>
        <taxon>Metazoa</taxon>
        <taxon>Chordata</taxon>
        <taxon>Craniata</taxon>
        <taxon>Vertebrata</taxon>
        <taxon>Euteleostomi</taxon>
        <taxon>Mammalia</taxon>
        <taxon>Eutheria</taxon>
        <taxon>Euarchontoglires</taxon>
        <taxon>Glires</taxon>
        <taxon>Rodentia</taxon>
        <taxon>Myomorpha</taxon>
        <taxon>Muroidea</taxon>
        <taxon>Muridae</taxon>
        <taxon>Murinae</taxon>
        <taxon>Mus</taxon>
        <taxon>Mus</taxon>
    </lineage>
</organism>
<reference key="1">
    <citation type="journal article" date="1981" name="Cell">
        <title>Sequence and gene organization of mouse mitochondrial DNA.</title>
        <authorList>
            <person name="Bibb M.J."/>
            <person name="van Etten R.A."/>
            <person name="Wright C.T."/>
            <person name="Walberg M.W."/>
            <person name="Clayton D.A."/>
        </authorList>
    </citation>
    <scope>NUCLEOTIDE SEQUENCE [GENOMIC DNA]</scope>
</reference>
<reference key="2">
    <citation type="journal article" date="2001" name="J. Hered.">
        <title>Unique mutations in mitochondrial DNA of senescence-accelerated mouse (SAM) strains.</title>
        <authorList>
            <person name="Mizutani J."/>
            <person name="Chiba T."/>
            <person name="Tanaka M."/>
            <person name="Higuchi K."/>
            <person name="Mori M."/>
        </authorList>
    </citation>
    <scope>NUCLEOTIDE SEQUENCE [GENOMIC DNA]</scope>
    <source>
        <strain>C3H/He</strain>
        <strain>SAMP1</strain>
        <strain>SAMP8</strain>
        <strain>SAMR1</strain>
        <tissue>Liver</tissue>
    </source>
</reference>
<reference key="3">
    <citation type="submission" date="2004-02" db="EMBL/GenBank/DDBJ databases">
        <title>The ALR/Lt mouse: contribution of the mitochondrial genome in resistance against both chemically-induced and autoimmune diabetes.</title>
        <authorList>
            <person name="Mathews C.E."/>
            <person name="Leiter E.H."/>
            <person name="Spirina O."/>
            <person name="Bykhovskaya Y."/>
            <person name="Fischel-Ghodsian N."/>
        </authorList>
    </citation>
    <scope>NUCLEOTIDE SEQUENCE [GENOMIC DNA]</scope>
    <source>
        <strain>ALR/Lt</strain>
        <strain>ALS/Lt</strain>
        <strain>NOD/LtJ</strain>
        <strain>NON/Lt</strain>
    </source>
</reference>
<reference key="4">
    <citation type="journal article" date="2003" name="Nucleic Acids Res.">
        <title>Revisiting the mouse mitochondrial DNA sequence.</title>
        <authorList>
            <person name="Bayona-Bafaluy M.P."/>
            <person name="Acin-Perez R."/>
            <person name="Mullikin J.C."/>
            <person name="Park J.S."/>
            <person name="Moreno-Loshuertos R."/>
            <person name="Hu P."/>
            <person name="Perez-Martos A."/>
            <person name="Fernandez-Silva P."/>
            <person name="Bai Y."/>
            <person name="Enriquez J.A."/>
        </authorList>
    </citation>
    <scope>NUCLEOTIDE SEQUENCE [LARGE SCALE GENOMIC DNA]</scope>
    <source>
        <strain>BALB/cJ</strain>
        <strain>C3H/An</strain>
        <strain>C57BL/6J</strain>
        <tissue>Fibroblast</tissue>
        <tissue>Platelet</tissue>
    </source>
</reference>
<reference key="5">
    <citation type="submission" date="2007-04" db="UniProtKB">
        <authorList>
            <person name="Lubec G."/>
            <person name="Kang S.U."/>
        </authorList>
    </citation>
    <scope>PROTEIN SEQUENCE OF 27-54 AND 127-134</scope>
    <scope>IDENTIFICATION BY MASS SPECTROMETRY</scope>
    <source>
        <strain>C57BL/6J</strain>
        <tissue>Brain</tissue>
    </source>
</reference>
<reference key="6">
    <citation type="journal article" date="2010" name="Cell">
        <title>A tissue-specific atlas of mouse protein phosphorylation and expression.</title>
        <authorList>
            <person name="Huttlin E.L."/>
            <person name="Jedrychowski M.P."/>
            <person name="Elias J.E."/>
            <person name="Goswami T."/>
            <person name="Rad R."/>
            <person name="Beausoleil S.A."/>
            <person name="Villen J."/>
            <person name="Haas W."/>
            <person name="Sowa M.E."/>
            <person name="Gygi S.P."/>
        </authorList>
    </citation>
    <scope>IDENTIFICATION BY MASS SPECTROMETRY [LARGE SCALE ANALYSIS]</scope>
    <source>
        <tissue>Brain</tissue>
        <tissue>Brown adipose tissue</tissue>
        <tissue>Heart</tissue>
        <tissue>Kidney</tissue>
        <tissue>Liver</tissue>
        <tissue>Lung</tissue>
        <tissue>Pancreas</tissue>
        <tissue>Spleen</tissue>
        <tissue>Testis</tissue>
    </source>
</reference>
<reference evidence="5" key="7">
    <citation type="journal article" date="2024" name="Nat. Struct. Mol. Biol.">
        <title>SCAF1 drives the compositional diversity of mammalian respirasomes.</title>
        <authorList>
            <person name="Vercellino I."/>
            <person name="Sazanov L.A."/>
        </authorList>
    </citation>
    <scope>STRUCTURE BY ELECTRON MICROSCOPY (3.60 ANGSTROMS) IN COMPLEX WITH MITOCHONDRIAL RESPIRATORY SUPERCOMPLEX</scope>
    <scope>FUNCTION</scope>
    <scope>SUBCELLULAR LOCATION</scope>
    <scope>SUBUNIT</scope>
</reference>
<name>NU1M_MOUSE</name>
<gene>
    <name type="primary">Mtnd1</name>
    <name type="synonym">mt-Nd1</name>
    <name type="synonym">Nd1</name>
</gene>
<dbReference type="EC" id="7.1.1.2" evidence="1"/>
<dbReference type="EMBL" id="V00711">
    <property type="protein sequence ID" value="CAA24080.1"/>
    <property type="status" value="ALT_INIT"/>
    <property type="molecule type" value="Genomic_DNA"/>
</dbReference>
<dbReference type="EMBL" id="J01420">
    <property type="protein sequence ID" value="AAB48644.1"/>
    <property type="status" value="ALT_INIT"/>
    <property type="molecule type" value="Genomic_DNA"/>
</dbReference>
<dbReference type="EMBL" id="AB042523">
    <property type="protein sequence ID" value="BAA95653.2"/>
    <property type="molecule type" value="Genomic_DNA"/>
</dbReference>
<dbReference type="EMBL" id="AB042524">
    <property type="protein sequence ID" value="BAA95640.2"/>
    <property type="molecule type" value="Genomic_DNA"/>
</dbReference>
<dbReference type="EMBL" id="AB042809">
    <property type="protein sequence ID" value="BAA95795.2"/>
    <property type="molecule type" value="Genomic_DNA"/>
</dbReference>
<dbReference type="EMBL" id="AB049357">
    <property type="protein sequence ID" value="BAB13801.2"/>
    <property type="molecule type" value="Genomic_DNA"/>
</dbReference>
<dbReference type="EMBL" id="AJ512208">
    <property type="protein sequence ID" value="CAD54432.1"/>
    <property type="molecule type" value="Genomic_DNA"/>
</dbReference>
<dbReference type="EMBL" id="AY172335">
    <property type="protein sequence ID" value="AAN85122.1"/>
    <property type="molecule type" value="Genomic_DNA"/>
</dbReference>
<dbReference type="EMBL" id="AY339599">
    <property type="protein sequence ID" value="AAP89023.2"/>
    <property type="molecule type" value="Genomic_DNA"/>
</dbReference>
<dbReference type="EMBL" id="AJ489607">
    <property type="protein sequence ID" value="CAD33907.1"/>
    <property type="molecule type" value="Genomic_DNA"/>
</dbReference>
<dbReference type="EMBL" id="AY533105">
    <property type="protein sequence ID" value="AAS01439.1"/>
    <property type="molecule type" value="Genomic_DNA"/>
</dbReference>
<dbReference type="EMBL" id="AY533106">
    <property type="protein sequence ID" value="AAS01452.1"/>
    <property type="molecule type" value="Genomic_DNA"/>
</dbReference>
<dbReference type="EMBL" id="AY533107">
    <property type="protein sequence ID" value="AAS01465.1"/>
    <property type="molecule type" value="Genomic_DNA"/>
</dbReference>
<dbReference type="EMBL" id="AY533108">
    <property type="protein sequence ID" value="AAS01478.1"/>
    <property type="molecule type" value="Genomic_DNA"/>
</dbReference>
<dbReference type="PIR" id="A00409">
    <property type="entry name" value="QXMS1M"/>
</dbReference>
<dbReference type="RefSeq" id="NP_904328.1">
    <property type="nucleotide sequence ID" value="NC_005089.1"/>
</dbReference>
<dbReference type="RefSeq" id="YP_220550.1">
    <property type="nucleotide sequence ID" value="NC_006914.1"/>
</dbReference>
<dbReference type="PDB" id="6G2J">
    <property type="method" value="EM"/>
    <property type="resolution" value="3.30 A"/>
    <property type="chains" value="H=1-318"/>
</dbReference>
<dbReference type="PDB" id="6G72">
    <property type="method" value="EM"/>
    <property type="resolution" value="3.90 A"/>
    <property type="chains" value="H=1-318"/>
</dbReference>
<dbReference type="PDB" id="6ZR2">
    <property type="method" value="EM"/>
    <property type="resolution" value="3.10 A"/>
    <property type="chains" value="H=1-318"/>
</dbReference>
<dbReference type="PDB" id="6ZTQ">
    <property type="method" value="EM"/>
    <property type="resolution" value="3.00 A"/>
    <property type="chains" value="H=1-318"/>
</dbReference>
<dbReference type="PDB" id="7AK5">
    <property type="method" value="EM"/>
    <property type="resolution" value="3.17 A"/>
    <property type="chains" value="H=1-318"/>
</dbReference>
<dbReference type="PDB" id="7AK6">
    <property type="method" value="EM"/>
    <property type="resolution" value="3.82 A"/>
    <property type="chains" value="H=1-318"/>
</dbReference>
<dbReference type="PDB" id="7B93">
    <property type="method" value="EM"/>
    <property type="resolution" value="3.04 A"/>
    <property type="chains" value="H=1-318"/>
</dbReference>
<dbReference type="PDB" id="7LFI">
    <property type="method" value="X-ray"/>
    <property type="resolution" value="1.70 A"/>
    <property type="chains" value="C/F=1-7"/>
</dbReference>
<dbReference type="PDB" id="7LFJ">
    <property type="method" value="X-ray"/>
    <property type="resolution" value="1.70 A"/>
    <property type="chains" value="C/F=1-7"/>
</dbReference>
<dbReference type="PDB" id="7LFK">
    <property type="method" value="X-ray"/>
    <property type="resolution" value="1.60 A"/>
    <property type="chains" value="C/F=1-7"/>
</dbReference>
<dbReference type="PDB" id="7LFL">
    <property type="method" value="X-ray"/>
    <property type="resolution" value="1.60 A"/>
    <property type="chains" value="C=1-7"/>
</dbReference>
<dbReference type="PDB" id="7LFM">
    <property type="method" value="X-ray"/>
    <property type="resolution" value="1.60 A"/>
    <property type="chains" value="C/F=1-7"/>
</dbReference>
<dbReference type="PDB" id="7PSA">
    <property type="method" value="EM"/>
    <property type="resolution" value="3.40 A"/>
    <property type="chains" value="H=1-318"/>
</dbReference>
<dbReference type="PDB" id="8C2S">
    <property type="method" value="EM"/>
    <property type="resolution" value="3.90 A"/>
    <property type="chains" value="H=1-318"/>
</dbReference>
<dbReference type="PDB" id="8CA3">
    <property type="method" value="EM"/>
    <property type="resolution" value="3.20 A"/>
    <property type="chains" value="H=1-318"/>
</dbReference>
<dbReference type="PDB" id="8CA5">
    <property type="method" value="EM"/>
    <property type="resolution" value="3.90 A"/>
    <property type="chains" value="H=1-318"/>
</dbReference>
<dbReference type="PDB" id="8IAO">
    <property type="method" value="EM"/>
    <property type="resolution" value="4.20 A"/>
    <property type="chains" value="H=1-318"/>
</dbReference>
<dbReference type="PDB" id="8IAP">
    <property type="method" value="EM"/>
    <property type="resolution" value="3.20 A"/>
    <property type="chains" value="H=1-318"/>
</dbReference>
<dbReference type="PDB" id="8IB4">
    <property type="method" value="EM"/>
    <property type="resolution" value="4.30 A"/>
    <property type="chains" value="H=1-318"/>
</dbReference>
<dbReference type="PDB" id="8IB5">
    <property type="method" value="EM"/>
    <property type="resolution" value="3.30 A"/>
    <property type="chains" value="H=1-318"/>
</dbReference>
<dbReference type="PDB" id="8IB9">
    <property type="method" value="EM"/>
    <property type="resolution" value="4.30 A"/>
    <property type="chains" value="H=1-318"/>
</dbReference>
<dbReference type="PDB" id="8IBA">
    <property type="method" value="EM"/>
    <property type="resolution" value="3.20 A"/>
    <property type="chains" value="H=1-318"/>
</dbReference>
<dbReference type="PDB" id="8IBD">
    <property type="method" value="EM"/>
    <property type="resolution" value="4.20 A"/>
    <property type="chains" value="H=1-318"/>
</dbReference>
<dbReference type="PDB" id="8IBE">
    <property type="method" value="EM"/>
    <property type="resolution" value="3.30 A"/>
    <property type="chains" value="H=1-318"/>
</dbReference>
<dbReference type="PDB" id="8IC2">
    <property type="method" value="EM"/>
    <property type="resolution" value="6.30 A"/>
    <property type="chains" value="H=1-318"/>
</dbReference>
<dbReference type="PDB" id="8IC3">
    <property type="method" value="EM"/>
    <property type="resolution" value="3.20 A"/>
    <property type="chains" value="H=1-318"/>
</dbReference>
<dbReference type="PDB" id="8OLT">
    <property type="method" value="EM"/>
    <property type="resolution" value="2.84 A"/>
    <property type="chains" value="H=1-318"/>
</dbReference>
<dbReference type="PDB" id="8OM1">
    <property type="method" value="EM"/>
    <property type="resolution" value="2.39 A"/>
    <property type="chains" value="H=1-318"/>
</dbReference>
<dbReference type="PDB" id="8PW5">
    <property type="method" value="EM"/>
    <property type="resolution" value="3.60 A"/>
    <property type="chains" value="H1=1-318"/>
</dbReference>
<dbReference type="PDB" id="8PW6">
    <property type="method" value="EM"/>
    <property type="resolution" value="3.30 A"/>
    <property type="chains" value="H1=1-318"/>
</dbReference>
<dbReference type="PDB" id="8PW7">
    <property type="method" value="EM"/>
    <property type="resolution" value="3.50 A"/>
    <property type="chains" value="H1=1-318"/>
</dbReference>
<dbReference type="PDB" id="8RGP">
    <property type="method" value="EM"/>
    <property type="resolution" value="3.00 A"/>
    <property type="chains" value="H=1-318"/>
</dbReference>
<dbReference type="PDB" id="8RGQ">
    <property type="method" value="EM"/>
    <property type="resolution" value="3.00 A"/>
    <property type="chains" value="H=1-318"/>
</dbReference>
<dbReference type="PDB" id="8RGR">
    <property type="method" value="EM"/>
    <property type="resolution" value="2.90 A"/>
    <property type="chains" value="H=1-318"/>
</dbReference>
<dbReference type="PDB" id="8RGT">
    <property type="method" value="EM"/>
    <property type="resolution" value="3.10 A"/>
    <property type="chains" value="H=1-318"/>
</dbReference>
<dbReference type="PDB" id="8XNL">
    <property type="method" value="EM"/>
    <property type="resolution" value="3.10 A"/>
    <property type="chains" value="H=1-318"/>
</dbReference>
<dbReference type="PDB" id="8XNM">
    <property type="method" value="EM"/>
    <property type="resolution" value="3.50 A"/>
    <property type="chains" value="H=1-318"/>
</dbReference>
<dbReference type="PDB" id="8XNN">
    <property type="method" value="EM"/>
    <property type="resolution" value="3.60 A"/>
    <property type="chains" value="H=1-318"/>
</dbReference>
<dbReference type="PDB" id="8XNO">
    <property type="method" value="EM"/>
    <property type="resolution" value="3.40 A"/>
    <property type="chains" value="H=1-318"/>
</dbReference>
<dbReference type="PDB" id="8XNP">
    <property type="method" value="EM"/>
    <property type="resolution" value="3.50 A"/>
    <property type="chains" value="H=1-318"/>
</dbReference>
<dbReference type="PDB" id="8XNQ">
    <property type="method" value="EM"/>
    <property type="resolution" value="3.70 A"/>
    <property type="chains" value="H=1-318"/>
</dbReference>
<dbReference type="PDB" id="8XNR">
    <property type="method" value="EM"/>
    <property type="resolution" value="3.30 A"/>
    <property type="chains" value="H=1-318"/>
</dbReference>
<dbReference type="PDB" id="8XNS">
    <property type="method" value="EM"/>
    <property type="resolution" value="3.50 A"/>
    <property type="chains" value="H=1-318"/>
</dbReference>
<dbReference type="PDB" id="8XNT">
    <property type="method" value="EM"/>
    <property type="resolution" value="4.10 A"/>
    <property type="chains" value="H=1-318"/>
</dbReference>
<dbReference type="PDB" id="8XNU">
    <property type="method" value="EM"/>
    <property type="resolution" value="3.60 A"/>
    <property type="chains" value="H=1-318"/>
</dbReference>
<dbReference type="PDB" id="8XNV">
    <property type="method" value="EM"/>
    <property type="resolution" value="3.30 A"/>
    <property type="chains" value="H=1-318"/>
</dbReference>
<dbReference type="PDB" id="8XNW">
    <property type="method" value="EM"/>
    <property type="resolution" value="3.60 A"/>
    <property type="chains" value="H=1-318"/>
</dbReference>
<dbReference type="PDB" id="8XNX">
    <property type="method" value="EM"/>
    <property type="resolution" value="3.50 A"/>
    <property type="chains" value="H=1-318"/>
</dbReference>
<dbReference type="PDB" id="8XNY">
    <property type="method" value="EM"/>
    <property type="resolution" value="4.10 A"/>
    <property type="chains" value="H=1-318"/>
</dbReference>
<dbReference type="PDB" id="8XNZ">
    <property type="method" value="EM"/>
    <property type="resolution" value="3.30 A"/>
    <property type="chains" value="H=1-318"/>
</dbReference>
<dbReference type="PDB" id="8XO0">
    <property type="method" value="EM"/>
    <property type="resolution" value="4.20 A"/>
    <property type="chains" value="H=1-318"/>
</dbReference>
<dbReference type="PDBsum" id="6G2J"/>
<dbReference type="PDBsum" id="6G72"/>
<dbReference type="PDBsum" id="6ZR2"/>
<dbReference type="PDBsum" id="6ZTQ"/>
<dbReference type="PDBsum" id="7AK5"/>
<dbReference type="PDBsum" id="7AK6"/>
<dbReference type="PDBsum" id="7B93"/>
<dbReference type="PDBsum" id="7LFI"/>
<dbReference type="PDBsum" id="7LFJ"/>
<dbReference type="PDBsum" id="7LFK"/>
<dbReference type="PDBsum" id="7LFL"/>
<dbReference type="PDBsum" id="7LFM"/>
<dbReference type="PDBsum" id="7PSA"/>
<dbReference type="PDBsum" id="8C2S"/>
<dbReference type="PDBsum" id="8CA3"/>
<dbReference type="PDBsum" id="8CA5"/>
<dbReference type="PDBsum" id="8IAO"/>
<dbReference type="PDBsum" id="8IAP"/>
<dbReference type="PDBsum" id="8IB4"/>
<dbReference type="PDBsum" id="8IB5"/>
<dbReference type="PDBsum" id="8IB9"/>
<dbReference type="PDBsum" id="8IBA"/>
<dbReference type="PDBsum" id="8IBD"/>
<dbReference type="PDBsum" id="8IBE"/>
<dbReference type="PDBsum" id="8IC2"/>
<dbReference type="PDBsum" id="8IC3"/>
<dbReference type="PDBsum" id="8OLT"/>
<dbReference type="PDBsum" id="8OM1"/>
<dbReference type="PDBsum" id="8PW5"/>
<dbReference type="PDBsum" id="8PW6"/>
<dbReference type="PDBsum" id="8PW7"/>
<dbReference type="PDBsum" id="8RGP"/>
<dbReference type="PDBsum" id="8RGQ"/>
<dbReference type="PDBsum" id="8RGR"/>
<dbReference type="PDBsum" id="8RGT"/>
<dbReference type="PDBsum" id="8XNL"/>
<dbReference type="PDBsum" id="8XNM"/>
<dbReference type="PDBsum" id="8XNN"/>
<dbReference type="PDBsum" id="8XNO"/>
<dbReference type="PDBsum" id="8XNP"/>
<dbReference type="PDBsum" id="8XNQ"/>
<dbReference type="PDBsum" id="8XNR"/>
<dbReference type="PDBsum" id="8XNS"/>
<dbReference type="PDBsum" id="8XNT"/>
<dbReference type="PDBsum" id="8XNU"/>
<dbReference type="PDBsum" id="8XNV"/>
<dbReference type="PDBsum" id="8XNW"/>
<dbReference type="PDBsum" id="8XNX"/>
<dbReference type="PDBsum" id="8XNY"/>
<dbReference type="PDBsum" id="8XNZ"/>
<dbReference type="PDBsum" id="8XO0"/>
<dbReference type="EMDB" id="EMD-11377"/>
<dbReference type="EMDB" id="EMD-11424"/>
<dbReference type="EMDB" id="EMD-11810"/>
<dbReference type="EMDB" id="EMD-11811"/>
<dbReference type="EMDB" id="EMD-12095"/>
<dbReference type="EMDB" id="EMD-13611"/>
<dbReference type="EMDB" id="EMD-16398"/>
<dbReference type="EMDB" id="EMD-16516"/>
<dbReference type="EMDB" id="EMD-16518"/>
<dbReference type="EMDB" id="EMD-16962"/>
<dbReference type="EMDB" id="EMD-16965"/>
<dbReference type="EMDB" id="EMD-17989"/>
<dbReference type="EMDB" id="EMD-17990"/>
<dbReference type="EMDB" id="EMD-17991"/>
<dbReference type="EMDB" id="EMD-19145"/>
<dbReference type="EMDB" id="EMD-19146"/>
<dbReference type="EMDB" id="EMD-19147"/>
<dbReference type="EMDB" id="EMD-19148"/>
<dbReference type="EMDB" id="EMD-35313"/>
<dbReference type="EMDB" id="EMD-35314"/>
<dbReference type="EMDB" id="EMD-35331"/>
<dbReference type="EMDB" id="EMD-35332"/>
<dbReference type="EMDB" id="EMD-35336"/>
<dbReference type="EMDB" id="EMD-35337"/>
<dbReference type="EMDB" id="EMD-35340"/>
<dbReference type="EMDB" id="EMD-35341"/>
<dbReference type="EMDB" id="EMD-35352"/>
<dbReference type="EMDB" id="EMD-35353"/>
<dbReference type="EMDB" id="EMD-38506"/>
<dbReference type="EMDB" id="EMD-38507"/>
<dbReference type="EMDB" id="EMD-38508"/>
<dbReference type="EMDB" id="EMD-38509"/>
<dbReference type="EMDB" id="EMD-38510"/>
<dbReference type="EMDB" id="EMD-38511"/>
<dbReference type="EMDB" id="EMD-38512"/>
<dbReference type="EMDB" id="EMD-38513"/>
<dbReference type="EMDB" id="EMD-38514"/>
<dbReference type="EMDB" id="EMD-38515"/>
<dbReference type="EMDB" id="EMD-38516"/>
<dbReference type="EMDB" id="EMD-38517"/>
<dbReference type="EMDB" id="EMD-38518"/>
<dbReference type="EMDB" id="EMD-38519"/>
<dbReference type="EMDB" id="EMD-38520"/>
<dbReference type="EMDB" id="EMD-38521"/>
<dbReference type="EMDB" id="EMD-4345"/>
<dbReference type="EMDB" id="EMD-4356"/>
<dbReference type="SMR" id="P03888"/>
<dbReference type="BioGRID" id="201547">
    <property type="interactions" value="6"/>
</dbReference>
<dbReference type="ComplexPortal" id="CPX-266">
    <property type="entry name" value="Mitochondrial respiratory chain complex I"/>
</dbReference>
<dbReference type="CORUM" id="P03888"/>
<dbReference type="DIP" id="DIP-61655N"/>
<dbReference type="FunCoup" id="P03888">
    <property type="interactions" value="233"/>
</dbReference>
<dbReference type="IntAct" id="P03888">
    <property type="interactions" value="4"/>
</dbReference>
<dbReference type="STRING" id="10090.ENSMUSP00000080991"/>
<dbReference type="GlyGen" id="P03888">
    <property type="glycosylation" value="1 site, 1 O-linked glycan (1 site)"/>
</dbReference>
<dbReference type="SwissPalm" id="P03888"/>
<dbReference type="jPOST" id="P03888"/>
<dbReference type="PaxDb" id="10090-ENSMUSP00000080991"/>
<dbReference type="ProteomicsDB" id="253037"/>
<dbReference type="Antibodypedia" id="35355">
    <property type="antibodies" value="236 antibodies from 28 providers"/>
</dbReference>
<dbReference type="Ensembl" id="ENSMUST00000082392.1">
    <property type="protein sequence ID" value="ENSMUSP00000080991.1"/>
    <property type="gene ID" value="ENSMUSG00000064341.1"/>
</dbReference>
<dbReference type="GeneID" id="17716"/>
<dbReference type="GeneID" id="3338902"/>
<dbReference type="KEGG" id="mmu:17716"/>
<dbReference type="AGR" id="MGI:101787"/>
<dbReference type="CTD" id="4535"/>
<dbReference type="MGI" id="MGI:101787">
    <property type="gene designation" value="mt-Nd1"/>
</dbReference>
<dbReference type="VEuPathDB" id="HostDB:ENSMUSG00000064341"/>
<dbReference type="eggNOG" id="KOG4770">
    <property type="taxonomic scope" value="Eukaryota"/>
</dbReference>
<dbReference type="GeneTree" id="ENSGT00390000006621"/>
<dbReference type="HOGENOM" id="CLU_015134_0_1_1"/>
<dbReference type="InParanoid" id="P03888"/>
<dbReference type="OMA" id="WSGWASN"/>
<dbReference type="OrthoDB" id="531329at2759"/>
<dbReference type="PhylomeDB" id="P03888"/>
<dbReference type="Reactome" id="R-MMU-611105">
    <property type="pathway name" value="Respiratory electron transport"/>
</dbReference>
<dbReference type="Reactome" id="R-MMU-6799198">
    <property type="pathway name" value="Complex I biogenesis"/>
</dbReference>
<dbReference type="ChiTaRS" id="mt-Nd1">
    <property type="organism name" value="mouse"/>
</dbReference>
<dbReference type="PRO" id="PR:P03888"/>
<dbReference type="Proteomes" id="UP000000589">
    <property type="component" value="Mitochondrion MT"/>
</dbReference>
<dbReference type="RNAct" id="P03888">
    <property type="molecule type" value="protein"/>
</dbReference>
<dbReference type="Bgee" id="ENSMUSG00000064341">
    <property type="expression patterns" value="Expressed in embryonic post-anal tail and 63 other cell types or tissues"/>
</dbReference>
<dbReference type="ExpressionAtlas" id="P03888">
    <property type="expression patterns" value="baseline and differential"/>
</dbReference>
<dbReference type="GO" id="GO:0030425">
    <property type="term" value="C:dendrite"/>
    <property type="evidence" value="ECO:0007669"/>
    <property type="project" value="Ensembl"/>
</dbReference>
<dbReference type="GO" id="GO:0005743">
    <property type="term" value="C:mitochondrial inner membrane"/>
    <property type="evidence" value="ECO:0000314"/>
    <property type="project" value="UniProtKB"/>
</dbReference>
<dbReference type="GO" id="GO:0005739">
    <property type="term" value="C:mitochondrion"/>
    <property type="evidence" value="ECO:0007005"/>
    <property type="project" value="MGI"/>
</dbReference>
<dbReference type="GO" id="GO:0043025">
    <property type="term" value="C:neuronal cell body"/>
    <property type="evidence" value="ECO:0007669"/>
    <property type="project" value="Ensembl"/>
</dbReference>
<dbReference type="GO" id="GO:0045271">
    <property type="term" value="C:respiratory chain complex I"/>
    <property type="evidence" value="ECO:0000314"/>
    <property type="project" value="UniProtKB"/>
</dbReference>
<dbReference type="GO" id="GO:0008137">
    <property type="term" value="F:NADH dehydrogenase (ubiquinone) activity"/>
    <property type="evidence" value="ECO:0000250"/>
    <property type="project" value="UniProtKB"/>
</dbReference>
<dbReference type="GO" id="GO:0009060">
    <property type="term" value="P:aerobic respiration"/>
    <property type="evidence" value="ECO:0000303"/>
    <property type="project" value="ComplexPortal"/>
</dbReference>
<dbReference type="GO" id="GO:0006120">
    <property type="term" value="P:mitochondrial electron transport, NADH to ubiquinone"/>
    <property type="evidence" value="ECO:0000250"/>
    <property type="project" value="UniProtKB"/>
</dbReference>
<dbReference type="GO" id="GO:0032981">
    <property type="term" value="P:mitochondrial respiratory chain complex I assembly"/>
    <property type="evidence" value="ECO:0000250"/>
    <property type="project" value="UniProtKB"/>
</dbReference>
<dbReference type="GO" id="GO:0042776">
    <property type="term" value="P:proton motive force-driven mitochondrial ATP synthesis"/>
    <property type="evidence" value="ECO:0000303"/>
    <property type="project" value="ComplexPortal"/>
</dbReference>
<dbReference type="GO" id="GO:0033194">
    <property type="term" value="P:response to hydroperoxide"/>
    <property type="evidence" value="ECO:0007669"/>
    <property type="project" value="Ensembl"/>
</dbReference>
<dbReference type="GO" id="GO:0001666">
    <property type="term" value="P:response to hypoxia"/>
    <property type="evidence" value="ECO:0007669"/>
    <property type="project" value="Ensembl"/>
</dbReference>
<dbReference type="GO" id="GO:0009410">
    <property type="term" value="P:response to xenobiotic stimulus"/>
    <property type="evidence" value="ECO:0007669"/>
    <property type="project" value="Ensembl"/>
</dbReference>
<dbReference type="HAMAP" id="MF_01350">
    <property type="entry name" value="NDH1_NuoH"/>
    <property type="match status" value="1"/>
</dbReference>
<dbReference type="InterPro" id="IPR001694">
    <property type="entry name" value="NADH_UbQ_OxRdtase_su1/FPO"/>
</dbReference>
<dbReference type="InterPro" id="IPR018086">
    <property type="entry name" value="NADH_UbQ_OxRdtase_su1_CS"/>
</dbReference>
<dbReference type="PANTHER" id="PTHR11432">
    <property type="entry name" value="NADH DEHYDROGENASE SUBUNIT 1"/>
    <property type="match status" value="1"/>
</dbReference>
<dbReference type="PANTHER" id="PTHR11432:SF3">
    <property type="entry name" value="NADH-UBIQUINONE OXIDOREDUCTASE CHAIN 1"/>
    <property type="match status" value="1"/>
</dbReference>
<dbReference type="Pfam" id="PF00146">
    <property type="entry name" value="NADHdh"/>
    <property type="match status" value="1"/>
</dbReference>
<dbReference type="PROSITE" id="PS00667">
    <property type="entry name" value="COMPLEX1_ND1_1"/>
    <property type="match status" value="1"/>
</dbReference>
<dbReference type="PROSITE" id="PS00668">
    <property type="entry name" value="COMPLEX1_ND1_2"/>
    <property type="match status" value="1"/>
</dbReference>
<sequence length="318" mass="36059">MFFINILTLLVPILIAMAFLTLVERKILGYMQLRKGPNIVGPYGILQPFADAMKLFMKEPMRPLTTSMSLFIIAPTLSLTLALSLWVPLPMPHPLINLNLGILFILATSSLSVYSILWSGWASNSKYSLFGALRAVAQTISYEVTMAIILLSVLLMNGSYSLQTLITTQEHMWLLLPAWPMAMMWFISTLAETNRAPFDLTEGESELVSGFNVEYAAGPFALFFMAEYTNIILMNALTTIIFLGPLYYINLPELYSTNFMMEALLLSSTFLWIRASYPRFRYDQLMHLLWKNFLPLTLALCMWHISLPIFTAGVPPYM</sequence>
<accession>P03888</accession>
<accession>Q9G0S6</accession>
<proteinExistence type="evidence at protein level"/>